<feature type="chain" id="PRO_0000211701" description="DNA gyrase inhibitor YacG">
    <location>
        <begin position="1"/>
        <end position="64"/>
    </location>
</feature>
<feature type="binding site" evidence="1">
    <location>
        <position position="6"/>
    </location>
    <ligand>
        <name>Zn(2+)</name>
        <dbReference type="ChEBI" id="CHEBI:29105"/>
    </ligand>
</feature>
<feature type="binding site" evidence="1">
    <location>
        <position position="9"/>
    </location>
    <ligand>
        <name>Zn(2+)</name>
        <dbReference type="ChEBI" id="CHEBI:29105"/>
    </ligand>
</feature>
<feature type="binding site" evidence="1">
    <location>
        <position position="25"/>
    </location>
    <ligand>
        <name>Zn(2+)</name>
        <dbReference type="ChEBI" id="CHEBI:29105"/>
    </ligand>
</feature>
<feature type="binding site" evidence="1">
    <location>
        <position position="29"/>
    </location>
    <ligand>
        <name>Zn(2+)</name>
        <dbReference type="ChEBI" id="CHEBI:29105"/>
    </ligand>
</feature>
<accession>P44921</accession>
<name>YACG_HAEIN</name>
<reference key="1">
    <citation type="journal article" date="1995" name="Science">
        <title>Whole-genome random sequencing and assembly of Haemophilus influenzae Rd.</title>
        <authorList>
            <person name="Fleischmann R.D."/>
            <person name="Adams M.D."/>
            <person name="White O."/>
            <person name="Clayton R.A."/>
            <person name="Kirkness E.F."/>
            <person name="Kerlavage A.R."/>
            <person name="Bult C.J."/>
            <person name="Tomb J.-F."/>
            <person name="Dougherty B.A."/>
            <person name="Merrick J.M."/>
            <person name="McKenney K."/>
            <person name="Sutton G.G."/>
            <person name="FitzHugh W."/>
            <person name="Fields C.A."/>
            <person name="Gocayne J.D."/>
            <person name="Scott J.D."/>
            <person name="Shirley R."/>
            <person name="Liu L.-I."/>
            <person name="Glodek A."/>
            <person name="Kelley J.M."/>
            <person name="Weidman J.F."/>
            <person name="Phillips C.A."/>
            <person name="Spriggs T."/>
            <person name="Hedblom E."/>
            <person name="Cotton M.D."/>
            <person name="Utterback T.R."/>
            <person name="Hanna M.C."/>
            <person name="Nguyen D.T."/>
            <person name="Saudek D.M."/>
            <person name="Brandon R.C."/>
            <person name="Fine L.D."/>
            <person name="Fritchman J.L."/>
            <person name="Fuhrmann J.L."/>
            <person name="Geoghagen N.S.M."/>
            <person name="Gnehm C.L."/>
            <person name="McDonald L.A."/>
            <person name="Small K.V."/>
            <person name="Fraser C.M."/>
            <person name="Smith H.O."/>
            <person name="Venter J.C."/>
        </authorList>
    </citation>
    <scope>NUCLEOTIDE SEQUENCE [LARGE SCALE GENOMIC DNA]</scope>
    <source>
        <strain>ATCC 51907 / DSM 11121 / KW20 / Rd</strain>
    </source>
</reference>
<reference key="2">
    <citation type="submission" date="1996-09" db="EMBL/GenBank/DDBJ databases">
        <authorList>
            <person name="White O."/>
            <person name="Clayton R.A."/>
            <person name="Kerlavage A.R."/>
            <person name="Fleischmann R.D."/>
        </authorList>
    </citation>
    <scope>SEQUENCE REVISION</scope>
</reference>
<organism>
    <name type="scientific">Haemophilus influenzae (strain ATCC 51907 / DSM 11121 / KW20 / Rd)</name>
    <dbReference type="NCBI Taxonomy" id="71421"/>
    <lineage>
        <taxon>Bacteria</taxon>
        <taxon>Pseudomonadati</taxon>
        <taxon>Pseudomonadota</taxon>
        <taxon>Gammaproteobacteria</taxon>
        <taxon>Pasteurellales</taxon>
        <taxon>Pasteurellaceae</taxon>
        <taxon>Haemophilus</taxon>
    </lineage>
</organism>
<dbReference type="EMBL" id="L42023">
    <property type="protein sequence ID" value="AAC22551.1"/>
    <property type="status" value="ALT_INIT"/>
    <property type="molecule type" value="Genomic_DNA"/>
</dbReference>
<dbReference type="RefSeq" id="NP_439052.1">
    <property type="nucleotide sequence ID" value="NC_000907.1"/>
</dbReference>
<dbReference type="SMR" id="P44921"/>
<dbReference type="STRING" id="71421.HI_0891"/>
<dbReference type="EnsemblBacteria" id="AAC22551">
    <property type="protein sequence ID" value="AAC22551"/>
    <property type="gene ID" value="HI_0891"/>
</dbReference>
<dbReference type="KEGG" id="hin:HI_0891"/>
<dbReference type="PATRIC" id="fig|71421.8.peg.933"/>
<dbReference type="eggNOG" id="COG3024">
    <property type="taxonomic scope" value="Bacteria"/>
</dbReference>
<dbReference type="HOGENOM" id="CLU_178280_3_1_6"/>
<dbReference type="OrthoDB" id="9809663at2"/>
<dbReference type="PhylomeDB" id="P44921"/>
<dbReference type="Proteomes" id="UP000000579">
    <property type="component" value="Chromosome"/>
</dbReference>
<dbReference type="GO" id="GO:0008657">
    <property type="term" value="F:DNA topoisomerase type II (double strand cut, ATP-hydrolyzing) inhibitor activity"/>
    <property type="evidence" value="ECO:0000318"/>
    <property type="project" value="GO_Central"/>
</dbReference>
<dbReference type="GO" id="GO:0008270">
    <property type="term" value="F:zinc ion binding"/>
    <property type="evidence" value="ECO:0007669"/>
    <property type="project" value="UniProtKB-UniRule"/>
</dbReference>
<dbReference type="GO" id="GO:0006355">
    <property type="term" value="P:regulation of DNA-templated transcription"/>
    <property type="evidence" value="ECO:0007669"/>
    <property type="project" value="InterPro"/>
</dbReference>
<dbReference type="Gene3D" id="3.30.50.10">
    <property type="entry name" value="Erythroid Transcription Factor GATA-1, subunit A"/>
    <property type="match status" value="1"/>
</dbReference>
<dbReference type="HAMAP" id="MF_00649">
    <property type="entry name" value="DNA_gyrase_inhibitor_YacG"/>
    <property type="match status" value="1"/>
</dbReference>
<dbReference type="InterPro" id="IPR005584">
    <property type="entry name" value="DNA_gyrase_inhibitor_YacG"/>
</dbReference>
<dbReference type="InterPro" id="IPR013088">
    <property type="entry name" value="Znf_NHR/GATA"/>
</dbReference>
<dbReference type="NCBIfam" id="NF001638">
    <property type="entry name" value="PRK00418.1"/>
    <property type="match status" value="1"/>
</dbReference>
<dbReference type="PANTHER" id="PTHR36150">
    <property type="entry name" value="DNA GYRASE INHIBITOR YACG"/>
    <property type="match status" value="1"/>
</dbReference>
<dbReference type="PANTHER" id="PTHR36150:SF1">
    <property type="entry name" value="DNA GYRASE INHIBITOR YACG"/>
    <property type="match status" value="1"/>
</dbReference>
<dbReference type="Pfam" id="PF03884">
    <property type="entry name" value="YacG"/>
    <property type="match status" value="1"/>
</dbReference>
<dbReference type="SUPFAM" id="SSF57716">
    <property type="entry name" value="Glucocorticoid receptor-like (DNA-binding domain)"/>
    <property type="match status" value="1"/>
</dbReference>
<keyword id="KW-0479">Metal-binding</keyword>
<keyword id="KW-1185">Reference proteome</keyword>
<keyword id="KW-0862">Zinc</keyword>
<sequence>MIEVPCPICQKSVPWINESTFRPFCSKRCQLIDLGEWAAEEKAIPSDTADFAMDPNVSDEWSIK</sequence>
<evidence type="ECO:0000255" key="1">
    <source>
        <dbReference type="HAMAP-Rule" id="MF_00649"/>
    </source>
</evidence>
<evidence type="ECO:0000305" key="2"/>
<gene>
    <name evidence="1" type="primary">yacG</name>
    <name type="ordered locus">HI_0891</name>
</gene>
<protein>
    <recommendedName>
        <fullName evidence="1">DNA gyrase inhibitor YacG</fullName>
    </recommendedName>
</protein>
<proteinExistence type="inferred from homology"/>
<comment type="function">
    <text evidence="1">Inhibits all the catalytic activities of DNA gyrase by preventing its interaction with DNA. Acts by binding directly to the C-terminal domain of GyrB, which probably disrupts DNA binding by the gyrase.</text>
</comment>
<comment type="cofactor">
    <cofactor evidence="1">
        <name>Zn(2+)</name>
        <dbReference type="ChEBI" id="CHEBI:29105"/>
    </cofactor>
    <text evidence="1">Binds 1 zinc ion.</text>
</comment>
<comment type="subunit">
    <text evidence="1">Interacts with GyrB.</text>
</comment>
<comment type="similarity">
    <text evidence="1">Belongs to the DNA gyrase inhibitor YacG family.</text>
</comment>
<comment type="sequence caution" evidence="2">
    <conflict type="erroneous initiation">
        <sequence resource="EMBL-CDS" id="AAC22551"/>
    </conflict>
    <text>Truncated N-terminus.</text>
</comment>